<dbReference type="EC" id="2.4.2.17" evidence="1"/>
<dbReference type="EMBL" id="AP010904">
    <property type="protein sequence ID" value="BAH73555.1"/>
    <property type="molecule type" value="Genomic_DNA"/>
</dbReference>
<dbReference type="RefSeq" id="WP_012749648.1">
    <property type="nucleotide sequence ID" value="NC_012796.1"/>
</dbReference>
<dbReference type="SMR" id="C4XTP0"/>
<dbReference type="STRING" id="573370.DMR_00640"/>
<dbReference type="KEGG" id="dma:DMR_00640"/>
<dbReference type="eggNOG" id="COG0040">
    <property type="taxonomic scope" value="Bacteria"/>
</dbReference>
<dbReference type="HOGENOM" id="CLU_038115_1_1_7"/>
<dbReference type="OrthoDB" id="9801867at2"/>
<dbReference type="UniPathway" id="UPA00031">
    <property type="reaction ID" value="UER00006"/>
</dbReference>
<dbReference type="Proteomes" id="UP000009071">
    <property type="component" value="Chromosome"/>
</dbReference>
<dbReference type="GO" id="GO:0005737">
    <property type="term" value="C:cytoplasm"/>
    <property type="evidence" value="ECO:0007669"/>
    <property type="project" value="UniProtKB-SubCell"/>
</dbReference>
<dbReference type="GO" id="GO:0005524">
    <property type="term" value="F:ATP binding"/>
    <property type="evidence" value="ECO:0007669"/>
    <property type="project" value="UniProtKB-KW"/>
</dbReference>
<dbReference type="GO" id="GO:0003879">
    <property type="term" value="F:ATP phosphoribosyltransferase activity"/>
    <property type="evidence" value="ECO:0007669"/>
    <property type="project" value="UniProtKB-UniRule"/>
</dbReference>
<dbReference type="GO" id="GO:0000287">
    <property type="term" value="F:magnesium ion binding"/>
    <property type="evidence" value="ECO:0007669"/>
    <property type="project" value="UniProtKB-UniRule"/>
</dbReference>
<dbReference type="GO" id="GO:0000105">
    <property type="term" value="P:L-histidine biosynthetic process"/>
    <property type="evidence" value="ECO:0007669"/>
    <property type="project" value="UniProtKB-UniRule"/>
</dbReference>
<dbReference type="CDD" id="cd13593">
    <property type="entry name" value="PBP2_HisGL3"/>
    <property type="match status" value="1"/>
</dbReference>
<dbReference type="FunFam" id="3.30.70.120:FF:000002">
    <property type="entry name" value="ATP phosphoribosyltransferase"/>
    <property type="match status" value="1"/>
</dbReference>
<dbReference type="FunFam" id="3.40.190.10:FF:000258">
    <property type="entry name" value="ATP phosphoribosyltransferase"/>
    <property type="match status" value="1"/>
</dbReference>
<dbReference type="Gene3D" id="3.30.70.120">
    <property type="match status" value="1"/>
</dbReference>
<dbReference type="Gene3D" id="3.40.190.10">
    <property type="entry name" value="Periplasmic binding protein-like II"/>
    <property type="match status" value="2"/>
</dbReference>
<dbReference type="HAMAP" id="MF_00079">
    <property type="entry name" value="HisG_Long"/>
    <property type="match status" value="1"/>
</dbReference>
<dbReference type="InterPro" id="IPR020621">
    <property type="entry name" value="ATP-PRT_HisG_long"/>
</dbReference>
<dbReference type="InterPro" id="IPR013820">
    <property type="entry name" value="ATP_PRibTrfase_cat"/>
</dbReference>
<dbReference type="InterPro" id="IPR018198">
    <property type="entry name" value="ATP_PRibTrfase_CS"/>
</dbReference>
<dbReference type="InterPro" id="IPR001348">
    <property type="entry name" value="ATP_PRibTrfase_HisG"/>
</dbReference>
<dbReference type="InterPro" id="IPR013115">
    <property type="entry name" value="HisG_C"/>
</dbReference>
<dbReference type="InterPro" id="IPR011322">
    <property type="entry name" value="N-reg_PII-like_a/b"/>
</dbReference>
<dbReference type="InterPro" id="IPR015867">
    <property type="entry name" value="N-reg_PII/ATP_PRibTrfase_C"/>
</dbReference>
<dbReference type="NCBIfam" id="TIGR00070">
    <property type="entry name" value="hisG"/>
    <property type="match status" value="1"/>
</dbReference>
<dbReference type="NCBIfam" id="TIGR03455">
    <property type="entry name" value="HisG_C-term"/>
    <property type="match status" value="1"/>
</dbReference>
<dbReference type="PANTHER" id="PTHR21403:SF10">
    <property type="entry name" value="ATP PHOSPHORIBOSYLTRANSFERASE"/>
    <property type="match status" value="1"/>
</dbReference>
<dbReference type="PANTHER" id="PTHR21403">
    <property type="entry name" value="ATP PHOSPHORIBOSYLTRANSFERASE ATP-PRTASE"/>
    <property type="match status" value="1"/>
</dbReference>
<dbReference type="Pfam" id="PF01634">
    <property type="entry name" value="HisG"/>
    <property type="match status" value="1"/>
</dbReference>
<dbReference type="Pfam" id="PF08029">
    <property type="entry name" value="HisG_C"/>
    <property type="match status" value="1"/>
</dbReference>
<dbReference type="SUPFAM" id="SSF54913">
    <property type="entry name" value="GlnB-like"/>
    <property type="match status" value="1"/>
</dbReference>
<dbReference type="SUPFAM" id="SSF53850">
    <property type="entry name" value="Periplasmic binding protein-like II"/>
    <property type="match status" value="1"/>
</dbReference>
<dbReference type="PROSITE" id="PS01316">
    <property type="entry name" value="ATP_P_PHORIBOSYLTR"/>
    <property type="match status" value="1"/>
</dbReference>
<protein>
    <recommendedName>
        <fullName evidence="1">ATP phosphoribosyltransferase</fullName>
        <shortName evidence="1">ATP-PRT</shortName>
        <shortName evidence="1">ATP-PRTase</shortName>
        <ecNumber evidence="1">2.4.2.17</ecNumber>
    </recommendedName>
</protein>
<reference key="1">
    <citation type="journal article" date="2009" name="Genome Res.">
        <title>Whole genome sequence of Desulfovibrio magneticus strain RS-1 revealed common gene clusters in magnetotactic bacteria.</title>
        <authorList>
            <person name="Nakazawa H."/>
            <person name="Arakaki A."/>
            <person name="Narita-Yamada S."/>
            <person name="Yashiro I."/>
            <person name="Jinno K."/>
            <person name="Aoki N."/>
            <person name="Tsuruyama A."/>
            <person name="Okamura Y."/>
            <person name="Tanikawa S."/>
            <person name="Fujita N."/>
            <person name="Takeyama H."/>
            <person name="Matsunaga T."/>
        </authorList>
    </citation>
    <scope>NUCLEOTIDE SEQUENCE [LARGE SCALE GENOMIC DNA]</scope>
    <source>
        <strain>ATCC 700980 / DSM 13731 / RS-1</strain>
    </source>
</reference>
<sequence>MAGDNMLKLGIPKGSLQDATIALFEKSGWKIRMHHRNYFPEINDPEITCSMCRAQEMSRYVESGTLDCGLTGKDWILENESDVVVVADLVYSKVSNRPARWVLAVAADSPYKRPEDLAGKKIATELCNFTKQYFSGAGIPVEVEFSWGATEAKVVEGLADAIVEVTETGTTIKAHGLRIISDLLSTNTQLIANKKAWEDPFKRRKIEILNMMLQGALRAEGLVGLKMNVPEEKMPAIMALLPSLTAPTVANLYNKDWLSVEIVVTEGIVRDLIPKLHDLGAEGIIEYALNKVI</sequence>
<gene>
    <name evidence="1" type="primary">hisG</name>
    <name type="ordered locus">DMR_00640</name>
</gene>
<feature type="chain" id="PRO_1000202529" description="ATP phosphoribosyltransferase">
    <location>
        <begin position="1"/>
        <end position="293"/>
    </location>
</feature>
<keyword id="KW-0028">Amino-acid biosynthesis</keyword>
<keyword id="KW-0067">ATP-binding</keyword>
<keyword id="KW-0963">Cytoplasm</keyword>
<keyword id="KW-0328">Glycosyltransferase</keyword>
<keyword id="KW-0368">Histidine biosynthesis</keyword>
<keyword id="KW-0460">Magnesium</keyword>
<keyword id="KW-0479">Metal-binding</keyword>
<keyword id="KW-0547">Nucleotide-binding</keyword>
<keyword id="KW-0808">Transferase</keyword>
<evidence type="ECO:0000255" key="1">
    <source>
        <dbReference type="HAMAP-Rule" id="MF_00079"/>
    </source>
</evidence>
<proteinExistence type="inferred from homology"/>
<comment type="function">
    <text evidence="1">Catalyzes the condensation of ATP and 5-phosphoribose 1-diphosphate to form N'-(5'-phosphoribosyl)-ATP (PR-ATP). Has a crucial role in the pathway because the rate of histidine biosynthesis seems to be controlled primarily by regulation of HisG enzymatic activity.</text>
</comment>
<comment type="catalytic activity">
    <reaction evidence="1">
        <text>1-(5-phospho-beta-D-ribosyl)-ATP + diphosphate = 5-phospho-alpha-D-ribose 1-diphosphate + ATP</text>
        <dbReference type="Rhea" id="RHEA:18473"/>
        <dbReference type="ChEBI" id="CHEBI:30616"/>
        <dbReference type="ChEBI" id="CHEBI:33019"/>
        <dbReference type="ChEBI" id="CHEBI:58017"/>
        <dbReference type="ChEBI" id="CHEBI:73183"/>
        <dbReference type="EC" id="2.4.2.17"/>
    </reaction>
</comment>
<comment type="cofactor">
    <cofactor evidence="1">
        <name>Mg(2+)</name>
        <dbReference type="ChEBI" id="CHEBI:18420"/>
    </cofactor>
</comment>
<comment type="activity regulation">
    <text evidence="1">Feedback inhibited by histidine.</text>
</comment>
<comment type="pathway">
    <text evidence="1">Amino-acid biosynthesis; L-histidine biosynthesis; L-histidine from 5-phospho-alpha-D-ribose 1-diphosphate: step 1/9.</text>
</comment>
<comment type="subcellular location">
    <subcellularLocation>
        <location evidence="1">Cytoplasm</location>
    </subcellularLocation>
</comment>
<comment type="similarity">
    <text evidence="1">Belongs to the ATP phosphoribosyltransferase family. Long subfamily.</text>
</comment>
<organism>
    <name type="scientific">Solidesulfovibrio magneticus (strain ATCC 700980 / DSM 13731 / RS-1)</name>
    <name type="common">Desulfovibrio magneticus</name>
    <dbReference type="NCBI Taxonomy" id="573370"/>
    <lineage>
        <taxon>Bacteria</taxon>
        <taxon>Pseudomonadati</taxon>
        <taxon>Thermodesulfobacteriota</taxon>
        <taxon>Desulfovibrionia</taxon>
        <taxon>Desulfovibrionales</taxon>
        <taxon>Desulfovibrionaceae</taxon>
        <taxon>Solidesulfovibrio</taxon>
    </lineage>
</organism>
<name>HIS1_SOLM1</name>
<accession>C4XTP0</accession>